<organism>
    <name type="scientific">Burkholderia pseudomallei (strain 668)</name>
    <dbReference type="NCBI Taxonomy" id="320373"/>
    <lineage>
        <taxon>Bacteria</taxon>
        <taxon>Pseudomonadati</taxon>
        <taxon>Pseudomonadota</taxon>
        <taxon>Betaproteobacteria</taxon>
        <taxon>Burkholderiales</taxon>
        <taxon>Burkholderiaceae</taxon>
        <taxon>Burkholderia</taxon>
        <taxon>pseudomallei group</taxon>
    </lineage>
</organism>
<accession>A3NBM6</accession>
<protein>
    <recommendedName>
        <fullName evidence="1">N-succinylarginine dihydrolase</fullName>
        <ecNumber evidence="1">3.5.3.23</ecNumber>
    </recommendedName>
</protein>
<keyword id="KW-0056">Arginine metabolism</keyword>
<keyword id="KW-0378">Hydrolase</keyword>
<proteinExistence type="inferred from homology"/>
<sequence length="446" mass="48049">MNAKEANFDGLVGPTHNYAGLSFGNVASLSNEKSDANPKAAAKQGLRKMKQLADLGFAQGVLPPQERPSLRLLRELGFSGKDADVIAKAARQAPELLAAASSASAMWTANAATVSPSADTGDARVHFTPANLCSKLHRAIEHESTRRTLAAIFADEARFAVHDALPGTPALGDEGAANHTRFCAEYGAPGVEFFVYGRAEYRRGPEPTRFPARQTFEASRAVAHRHGLREEATIYAQQRPDVIDAGVFHNDVIAVGNRDTLFCHEHAFVDPQAVYDALAASLGALGAQLNVIEVPDRAVSVADAVGSYLFNSQLLAREDGTQMLVVPQECRENANVAAYLDALVAGNGPIRDVRVFDLRESMKNGGGPACLRLRVVLNDAERAAVKPNVWIGDALFASLDAWIDKHYRDRLSPVDLADPALLDESRTALDELTQILGLGSLYDFQR</sequence>
<comment type="function">
    <text evidence="1">Catalyzes the hydrolysis of N(2)-succinylarginine into N(2)-succinylornithine, ammonia and CO(2).</text>
</comment>
<comment type="catalytic activity">
    <reaction evidence="1">
        <text>N(2)-succinyl-L-arginine + 2 H2O + 2 H(+) = N(2)-succinyl-L-ornithine + 2 NH4(+) + CO2</text>
        <dbReference type="Rhea" id="RHEA:19533"/>
        <dbReference type="ChEBI" id="CHEBI:15377"/>
        <dbReference type="ChEBI" id="CHEBI:15378"/>
        <dbReference type="ChEBI" id="CHEBI:16526"/>
        <dbReference type="ChEBI" id="CHEBI:28938"/>
        <dbReference type="ChEBI" id="CHEBI:58241"/>
        <dbReference type="ChEBI" id="CHEBI:58514"/>
        <dbReference type="EC" id="3.5.3.23"/>
    </reaction>
</comment>
<comment type="pathway">
    <text evidence="1">Amino-acid degradation; L-arginine degradation via AST pathway; L-glutamate and succinate from L-arginine: step 2/5.</text>
</comment>
<comment type="subunit">
    <text evidence="1">Homodimer.</text>
</comment>
<comment type="similarity">
    <text evidence="1">Belongs to the succinylarginine dihydrolase family.</text>
</comment>
<name>ASTB_BURP6</name>
<reference key="1">
    <citation type="journal article" date="2010" name="Genome Biol. Evol.">
        <title>Continuing evolution of Burkholderia mallei through genome reduction and large-scale rearrangements.</title>
        <authorList>
            <person name="Losada L."/>
            <person name="Ronning C.M."/>
            <person name="DeShazer D."/>
            <person name="Woods D."/>
            <person name="Fedorova N."/>
            <person name="Kim H.S."/>
            <person name="Shabalina S.A."/>
            <person name="Pearson T.R."/>
            <person name="Brinkac L."/>
            <person name="Tan P."/>
            <person name="Nandi T."/>
            <person name="Crabtree J."/>
            <person name="Badger J."/>
            <person name="Beckstrom-Sternberg S."/>
            <person name="Saqib M."/>
            <person name="Schutzer S.E."/>
            <person name="Keim P."/>
            <person name="Nierman W.C."/>
        </authorList>
    </citation>
    <scope>NUCLEOTIDE SEQUENCE [LARGE SCALE GENOMIC DNA]</scope>
    <source>
        <strain>668</strain>
    </source>
</reference>
<dbReference type="EC" id="3.5.3.23" evidence="1"/>
<dbReference type="EMBL" id="CP000570">
    <property type="protein sequence ID" value="ABN83219.1"/>
    <property type="molecule type" value="Genomic_DNA"/>
</dbReference>
<dbReference type="RefSeq" id="WP_011851941.1">
    <property type="nucleotide sequence ID" value="NC_009074.1"/>
</dbReference>
<dbReference type="SMR" id="A3NBM6"/>
<dbReference type="KEGG" id="bpd:BURPS668_2723"/>
<dbReference type="HOGENOM" id="CLU_053835_0_0_4"/>
<dbReference type="UniPathway" id="UPA00185">
    <property type="reaction ID" value="UER00280"/>
</dbReference>
<dbReference type="GO" id="GO:0009015">
    <property type="term" value="F:N-succinylarginine dihydrolase activity"/>
    <property type="evidence" value="ECO:0007669"/>
    <property type="project" value="UniProtKB-UniRule"/>
</dbReference>
<dbReference type="GO" id="GO:0019544">
    <property type="term" value="P:arginine catabolic process to glutamate"/>
    <property type="evidence" value="ECO:0007669"/>
    <property type="project" value="UniProtKB-UniRule"/>
</dbReference>
<dbReference type="GO" id="GO:0019545">
    <property type="term" value="P:arginine catabolic process to succinate"/>
    <property type="evidence" value="ECO:0007669"/>
    <property type="project" value="UniProtKB-UniRule"/>
</dbReference>
<dbReference type="Gene3D" id="3.75.10.20">
    <property type="entry name" value="Succinylarginine dihydrolase"/>
    <property type="match status" value="1"/>
</dbReference>
<dbReference type="HAMAP" id="MF_01172">
    <property type="entry name" value="AstB"/>
    <property type="match status" value="1"/>
</dbReference>
<dbReference type="InterPro" id="IPR037031">
    <property type="entry name" value="AstB_sf"/>
</dbReference>
<dbReference type="InterPro" id="IPR007079">
    <property type="entry name" value="SuccinylArg_d-Hdrlase_AstB"/>
</dbReference>
<dbReference type="NCBIfam" id="TIGR03241">
    <property type="entry name" value="arg_catab_astB"/>
    <property type="match status" value="1"/>
</dbReference>
<dbReference type="NCBIfam" id="NF009789">
    <property type="entry name" value="PRK13281.1"/>
    <property type="match status" value="1"/>
</dbReference>
<dbReference type="PANTHER" id="PTHR30420">
    <property type="entry name" value="N-SUCCINYLARGININE DIHYDROLASE"/>
    <property type="match status" value="1"/>
</dbReference>
<dbReference type="PANTHER" id="PTHR30420:SF2">
    <property type="entry name" value="N-SUCCINYLARGININE DIHYDROLASE"/>
    <property type="match status" value="1"/>
</dbReference>
<dbReference type="Pfam" id="PF04996">
    <property type="entry name" value="AstB"/>
    <property type="match status" value="1"/>
</dbReference>
<dbReference type="SUPFAM" id="SSF55909">
    <property type="entry name" value="Pentein"/>
    <property type="match status" value="1"/>
</dbReference>
<feature type="chain" id="PRO_1000065720" description="N-succinylarginine dihydrolase">
    <location>
        <begin position="1"/>
        <end position="446"/>
    </location>
</feature>
<feature type="active site" evidence="1">
    <location>
        <position position="174"/>
    </location>
</feature>
<feature type="active site" evidence="1">
    <location>
        <position position="249"/>
    </location>
</feature>
<feature type="active site" description="Nucleophile" evidence="1">
    <location>
        <position position="370"/>
    </location>
</feature>
<feature type="binding site" evidence="1">
    <location>
        <begin position="19"/>
        <end position="28"/>
    </location>
    <ligand>
        <name>substrate</name>
    </ligand>
</feature>
<feature type="binding site" evidence="1">
    <location>
        <position position="110"/>
    </location>
    <ligand>
        <name>substrate</name>
    </ligand>
</feature>
<feature type="binding site" evidence="1">
    <location>
        <begin position="137"/>
        <end position="138"/>
    </location>
    <ligand>
        <name>substrate</name>
    </ligand>
</feature>
<feature type="binding site" evidence="1">
    <location>
        <position position="213"/>
    </location>
    <ligand>
        <name>substrate</name>
    </ligand>
</feature>
<feature type="binding site" evidence="1">
    <location>
        <position position="251"/>
    </location>
    <ligand>
        <name>substrate</name>
    </ligand>
</feature>
<feature type="binding site" evidence="1">
    <location>
        <position position="364"/>
    </location>
    <ligand>
        <name>substrate</name>
    </ligand>
</feature>
<gene>
    <name evidence="1" type="primary">astB</name>
    <name type="ordered locus">BURPS668_2723</name>
</gene>
<evidence type="ECO:0000255" key="1">
    <source>
        <dbReference type="HAMAP-Rule" id="MF_01172"/>
    </source>
</evidence>